<comment type="function">
    <text evidence="2 4">Tubulin is the major constituent of microtubules, a cylinder consisting of laterally associated linear protofilaments composed of alpha- and beta-tubulin heterodimers (By similarity). Microtubules grow by the addition of GTP-tubulin dimers to the microtubule end, where a stabilizing cap forms (By similarity). Below the cap, tubulin dimers are in GDP-bound state, owing to GTPase activity of alpha-tubulin (By similarity). Required for the normal dynamic behavior of the non-centrosomal microtubules in the epidermal syncytium (PubMed:31995031). Involved in the redistribution of microtubule end-binding protein EB1/ebp-2 caused by wounding (PubMed:31995031). Required to modulate expression in the epidermis of antimicrobial peptides, such as nlp-29, after wounding, or fungal infection (PubMed:31995031).</text>
</comment>
<comment type="catalytic activity">
    <reaction evidence="2">
        <text>GTP + H2O = GDP + phosphate + H(+)</text>
        <dbReference type="Rhea" id="RHEA:19669"/>
        <dbReference type="ChEBI" id="CHEBI:15377"/>
        <dbReference type="ChEBI" id="CHEBI:15378"/>
        <dbReference type="ChEBI" id="CHEBI:37565"/>
        <dbReference type="ChEBI" id="CHEBI:43474"/>
        <dbReference type="ChEBI" id="CHEBI:58189"/>
    </reaction>
    <physiologicalReaction direction="left-to-right" evidence="2">
        <dbReference type="Rhea" id="RHEA:19670"/>
    </physiologicalReaction>
</comment>
<comment type="cofactor">
    <cofactor evidence="2">
        <name>Mg(2+)</name>
        <dbReference type="ChEBI" id="CHEBI:18420"/>
    </cofactor>
</comment>
<comment type="subunit">
    <text evidence="2">Dimer of alpha and beta chains (By similarity). A typical microtubule is a hollow water-filled tube with an outer diameter of 25 nm and an inner diameter of 15 nM (By similarity). Alpha-beta heterodimers associate head-to-tail to form protofilaments running lengthwise along the microtubule wall with the beta-tubulin subunit facing the microtubule plus end conferring a structural polarity (By similarity). Microtubules usually have 13 protofilaments but different protofilament numbers can be found in some organisms and specialized cells (By similarity).</text>
</comment>
<comment type="subcellular location">
    <subcellularLocation>
        <location evidence="2">Cytoplasm</location>
        <location evidence="2">Cytoskeleton</location>
    </subcellularLocation>
</comment>
<comment type="tissue specificity">
    <text evidence="5">Expressed in intestine, pharyngeal muscle cells, and a subset of neurons.</text>
</comment>
<comment type="developmental stage">
    <text evidence="5">Highly expressed during the early (L1-L3) larval stages, lower expression levels are seen in L4 larvae, adults, and embryos.</text>
</comment>
<comment type="PTM">
    <text evidence="2">Undergoes a tyrosination/detyrosination cycle, the cyclic removal and re-addition of a C-terminal tyrosine residue.</text>
</comment>
<comment type="disruption phenotype">
    <text evidence="4">RNAi-mediated knockdown abolishes recruitment of microtubule end-binding protein EB1/ebp-2 to a wound site (PubMed:31995031). Almost completely abolishes induction of nlp-29 expression upon infection with Drechmeria coniospora, or upon wounding (PubMed:31995031). Severely compromises expression pattern and recruitment of snf-12 upon wounding (PubMed:31995031).</text>
</comment>
<comment type="similarity">
    <text evidence="6">Belongs to the tubulin family.</text>
</comment>
<organism>
    <name type="scientific">Caenorhabditis elegans</name>
    <dbReference type="NCBI Taxonomy" id="6239"/>
    <lineage>
        <taxon>Eukaryota</taxon>
        <taxon>Metazoa</taxon>
        <taxon>Ecdysozoa</taxon>
        <taxon>Nematoda</taxon>
        <taxon>Chromadorea</taxon>
        <taxon>Rhabditida</taxon>
        <taxon>Rhabditina</taxon>
        <taxon>Rhabditomorpha</taxon>
        <taxon>Rhabditoidea</taxon>
        <taxon>Rhabditidae</taxon>
        <taxon>Peloderinae</taxon>
        <taxon>Caenorhabditis</taxon>
    </lineage>
</organism>
<evidence type="ECO:0000250" key="1"/>
<evidence type="ECO:0000250" key="2">
    <source>
        <dbReference type="UniProtKB" id="P68363"/>
    </source>
</evidence>
<evidence type="ECO:0000256" key="3">
    <source>
        <dbReference type="SAM" id="MobiDB-lite"/>
    </source>
</evidence>
<evidence type="ECO:0000269" key="4">
    <source>
    </source>
</evidence>
<evidence type="ECO:0000269" key="5">
    <source>
    </source>
</evidence>
<evidence type="ECO:0000305" key="6"/>
<accession>P34690</accession>
<accession>Q95QR1</accession>
<reference key="1">
    <citation type="journal article" date="1993" name="J. Mol. Biol.">
        <title>Molecular cloning and developmental expression of the alpha-2 tubulin gene of Caenorhabditis elegans.</title>
        <authorList>
            <person name="Fukushige T."/>
            <person name="Yasuda H."/>
            <person name="Siddiqui S.S."/>
        </authorList>
    </citation>
    <scope>NUCLEOTIDE SEQUENCE [GENOMIC DNA]</scope>
    <scope>TISSUE SPECIFICITY</scope>
    <scope>DEVELOPMENTAL STAGE</scope>
    <source>
        <strain>Bristol N2</strain>
    </source>
</reference>
<reference key="2">
    <citation type="journal article" date="1998" name="Science">
        <title>Genome sequence of the nematode C. elegans: a platform for investigating biology.</title>
        <authorList>
            <consortium name="The C. elegans sequencing consortium"/>
        </authorList>
    </citation>
    <scope>NUCLEOTIDE SEQUENCE [LARGE SCALE GENOMIC DNA]</scope>
    <source>
        <strain>Bristol N2</strain>
    </source>
</reference>
<reference evidence="6" key="3">
    <citation type="journal article" date="2020" name="Elife">
        <title>Microtubule plus-end dynamics link wound repair to the innate immune response.</title>
        <authorList>
            <person name="Taffoni C."/>
            <person name="Omi S."/>
            <person name="Huber C."/>
            <person name="Mailfert S."/>
            <person name="Fallet M."/>
            <person name="Rupprecht J.F."/>
            <person name="Ewbank J.J."/>
            <person name="Pujol N."/>
        </authorList>
    </citation>
    <scope>FUNCTION</scope>
    <scope>DISRUPTION PHENOTYPE</scope>
</reference>
<feature type="chain" id="PRO_0000048144" description="Tubulin alpha-2 chain">
    <location>
        <begin position="1"/>
        <end position="448"/>
    </location>
</feature>
<feature type="region of interest" description="Disordered" evidence="3">
    <location>
        <begin position="428"/>
        <end position="448"/>
    </location>
</feature>
<feature type="compositionally biased region" description="Acidic residues" evidence="3">
    <location>
        <begin position="429"/>
        <end position="448"/>
    </location>
</feature>
<feature type="active site" evidence="2">
    <location>
        <position position="252"/>
    </location>
</feature>
<feature type="binding site" evidence="2">
    <location>
        <position position="11"/>
    </location>
    <ligand>
        <name>GTP</name>
        <dbReference type="ChEBI" id="CHEBI:37565"/>
    </ligand>
</feature>
<feature type="binding site" evidence="2">
    <location>
        <position position="69"/>
    </location>
    <ligand>
        <name>GTP</name>
        <dbReference type="ChEBI" id="CHEBI:37565"/>
    </ligand>
</feature>
<feature type="binding site" evidence="2">
    <location>
        <position position="69"/>
    </location>
    <ligand>
        <name>Mg(2+)</name>
        <dbReference type="ChEBI" id="CHEBI:18420"/>
    </ligand>
</feature>
<feature type="binding site" evidence="2">
    <location>
        <position position="138"/>
    </location>
    <ligand>
        <name>GTP</name>
        <dbReference type="ChEBI" id="CHEBI:37565"/>
    </ligand>
</feature>
<feature type="binding site" evidence="2">
    <location>
        <position position="142"/>
    </location>
    <ligand>
        <name>GTP</name>
        <dbReference type="ChEBI" id="CHEBI:37565"/>
    </ligand>
</feature>
<feature type="binding site" evidence="2">
    <location>
        <position position="143"/>
    </location>
    <ligand>
        <name>GTP</name>
        <dbReference type="ChEBI" id="CHEBI:37565"/>
    </ligand>
</feature>
<feature type="binding site" evidence="2">
    <location>
        <position position="177"/>
    </location>
    <ligand>
        <name>GTP</name>
        <dbReference type="ChEBI" id="CHEBI:37565"/>
    </ligand>
</feature>
<feature type="binding site" evidence="2">
    <location>
        <position position="204"/>
    </location>
    <ligand>
        <name>GTP</name>
        <dbReference type="ChEBI" id="CHEBI:37565"/>
    </ligand>
</feature>
<feature type="binding site" evidence="2">
    <location>
        <position position="226"/>
    </location>
    <ligand>
        <name>GTP</name>
        <dbReference type="ChEBI" id="CHEBI:37565"/>
    </ligand>
</feature>
<feature type="site" description="Involved in polymerization" evidence="1">
    <location>
        <position position="448"/>
    </location>
</feature>
<keyword id="KW-0002">3D-structure</keyword>
<keyword id="KW-0963">Cytoplasm</keyword>
<keyword id="KW-0206">Cytoskeleton</keyword>
<keyword id="KW-0342">GTP-binding</keyword>
<keyword id="KW-0378">Hydrolase</keyword>
<keyword id="KW-0460">Magnesium</keyword>
<keyword id="KW-0479">Metal-binding</keyword>
<keyword id="KW-0493">Microtubule</keyword>
<keyword id="KW-0547">Nucleotide-binding</keyword>
<keyword id="KW-1185">Reference proteome</keyword>
<protein>
    <recommendedName>
        <fullName>Tubulin alpha-2 chain</fullName>
        <ecNumber evidence="2">3.6.5.-</ecNumber>
    </recommendedName>
</protein>
<sequence length="448" mass="49913">MREVISIHVGQAGVQIGNACWELYCLEHGIQPDGTMPTQSTNEGESFTTFFSDTGSGRYVPRSIFVDLEPTVVDEIRTGTYKKLFHPEQMITGKEDAANNYARGHYTVGKELIDTVLDRIRRLADNCSGLQGFFVFHSFGGGTGSGFTSLLMERLSVDYGKKSKLEFSIYPAPQVSTAVVEPYNSILTTHTTLEHSDCAFMVDNEAIYDICRRNLDVERPSYTNLNRIISQVVSSITASLRFDGALNVDLNEFQTNLVPYPRIHFPLAAYTPLISAEKAYHEALSVSDITNSCFEPANQMVKCDPRHGKYMAVCLLYRGDVVPKDVNTAIAAIKTKRTIQFVDWCPTGFKVGINYQPPTVVPGGDLAKVPRAVCMLSNTTAIAEAWSRLDYKFDLMYAKRAFVHWYVGEGMEEGEFTEAREDLAALEKDYEEVGADSNEGGEEEGEEY</sequence>
<dbReference type="EC" id="3.6.5.-" evidence="2"/>
<dbReference type="EMBL" id="D14965">
    <property type="protein sequence ID" value="BAA03610.1"/>
    <property type="molecule type" value="Genomic_DNA"/>
</dbReference>
<dbReference type="EMBL" id="Z99709">
    <property type="protein sequence ID" value="CAB16856.1"/>
    <property type="molecule type" value="Genomic_DNA"/>
</dbReference>
<dbReference type="PIR" id="S40439">
    <property type="entry name" value="S40439"/>
</dbReference>
<dbReference type="RefSeq" id="NP_001021050.1">
    <property type="nucleotide sequence ID" value="NM_001025879.7"/>
</dbReference>
<dbReference type="PDB" id="6E88">
    <property type="method" value="EM"/>
    <property type="resolution" value="4.80 A"/>
    <property type="chains" value="A/C/H/I/L/M=1-434"/>
</dbReference>
<dbReference type="PDBsum" id="6E88"/>
<dbReference type="EMDB" id="EMD-9004"/>
<dbReference type="SMR" id="P34690"/>
<dbReference type="BioGRID" id="38564">
    <property type="interactions" value="30"/>
</dbReference>
<dbReference type="FunCoup" id="P34690">
    <property type="interactions" value="416"/>
</dbReference>
<dbReference type="IntAct" id="P34690">
    <property type="interactions" value="2"/>
</dbReference>
<dbReference type="STRING" id="6239.C47B2.3.3"/>
<dbReference type="PaxDb" id="6239-C47B2.3.1"/>
<dbReference type="PeptideAtlas" id="P34690"/>
<dbReference type="EnsemblMetazoa" id="C47B2.3.1">
    <property type="protein sequence ID" value="C47B2.3.1"/>
    <property type="gene ID" value="WBGene00006529"/>
</dbReference>
<dbReference type="EnsemblMetazoa" id="C47B2.3.2">
    <property type="protein sequence ID" value="C47B2.3.2"/>
    <property type="gene ID" value="WBGene00006529"/>
</dbReference>
<dbReference type="GeneID" id="173167"/>
<dbReference type="KEGG" id="cel:CELE_C47B2.3"/>
<dbReference type="UCSC" id="C47B2.3.2">
    <property type="organism name" value="c. elegans"/>
</dbReference>
<dbReference type="AGR" id="WB:WBGene00006529"/>
<dbReference type="CTD" id="173167"/>
<dbReference type="WormBase" id="C47B2.3">
    <property type="protein sequence ID" value="CE17563"/>
    <property type="gene ID" value="WBGene00006529"/>
    <property type="gene designation" value="tba-2"/>
</dbReference>
<dbReference type="eggNOG" id="KOG1376">
    <property type="taxonomic scope" value="Eukaryota"/>
</dbReference>
<dbReference type="GeneTree" id="ENSGT00940000169069"/>
<dbReference type="HOGENOM" id="CLU_015718_0_0_1"/>
<dbReference type="InParanoid" id="P34690"/>
<dbReference type="OMA" id="DGTMPTQ"/>
<dbReference type="OrthoDB" id="1844at2759"/>
<dbReference type="PhylomeDB" id="P34690"/>
<dbReference type="CD-CODE" id="1E117272">
    <property type="entry name" value="Centrosome"/>
</dbReference>
<dbReference type="PRO" id="PR:P34690"/>
<dbReference type="Proteomes" id="UP000001940">
    <property type="component" value="Chromosome I"/>
</dbReference>
<dbReference type="Bgee" id="WBGene00006529">
    <property type="expression patterns" value="Expressed in germ line (C elegans) and 4 other cell types or tissues"/>
</dbReference>
<dbReference type="GO" id="GO:0005737">
    <property type="term" value="C:cytoplasm"/>
    <property type="evidence" value="ECO:0000318"/>
    <property type="project" value="GO_Central"/>
</dbReference>
<dbReference type="GO" id="GO:0005874">
    <property type="term" value="C:microtubule"/>
    <property type="evidence" value="ECO:0000318"/>
    <property type="project" value="GO_Central"/>
</dbReference>
<dbReference type="GO" id="GO:0005525">
    <property type="term" value="F:GTP binding"/>
    <property type="evidence" value="ECO:0000318"/>
    <property type="project" value="GO_Central"/>
</dbReference>
<dbReference type="GO" id="GO:0016787">
    <property type="term" value="F:hydrolase activity"/>
    <property type="evidence" value="ECO:0007669"/>
    <property type="project" value="UniProtKB-KW"/>
</dbReference>
<dbReference type="GO" id="GO:0046872">
    <property type="term" value="F:metal ion binding"/>
    <property type="evidence" value="ECO:0007669"/>
    <property type="project" value="UniProtKB-KW"/>
</dbReference>
<dbReference type="GO" id="GO:0005200">
    <property type="term" value="F:structural constituent of cytoskeleton"/>
    <property type="evidence" value="ECO:0000318"/>
    <property type="project" value="GO_Central"/>
</dbReference>
<dbReference type="GO" id="GO:0051642">
    <property type="term" value="P:centrosome localization"/>
    <property type="evidence" value="ECO:0000315"/>
    <property type="project" value="WormBase"/>
</dbReference>
<dbReference type="GO" id="GO:0009792">
    <property type="term" value="P:embryo development ending in birth or egg hatching"/>
    <property type="evidence" value="ECO:0000315"/>
    <property type="project" value="WormBase"/>
</dbReference>
<dbReference type="GO" id="GO:0000132">
    <property type="term" value="P:establishment of mitotic spindle orientation"/>
    <property type="evidence" value="ECO:0000316"/>
    <property type="project" value="WormBase"/>
</dbReference>
<dbReference type="GO" id="GO:0000226">
    <property type="term" value="P:microtubule cytoskeleton organization"/>
    <property type="evidence" value="ECO:0000318"/>
    <property type="project" value="GO_Central"/>
</dbReference>
<dbReference type="GO" id="GO:0000278">
    <property type="term" value="P:mitotic cell cycle"/>
    <property type="evidence" value="ECO:0000318"/>
    <property type="project" value="GO_Central"/>
</dbReference>
<dbReference type="GO" id="GO:0008104">
    <property type="term" value="P:protein localization"/>
    <property type="evidence" value="ECO:0000315"/>
    <property type="project" value="WormBase"/>
</dbReference>
<dbReference type="GO" id="GO:0032465">
    <property type="term" value="P:regulation of cytokinesis"/>
    <property type="evidence" value="ECO:0000316"/>
    <property type="project" value="WormBase"/>
</dbReference>
<dbReference type="CDD" id="cd02186">
    <property type="entry name" value="alpha_tubulin"/>
    <property type="match status" value="1"/>
</dbReference>
<dbReference type="FunFam" id="1.10.287.600:FF:000005">
    <property type="entry name" value="Tubulin alpha chain"/>
    <property type="match status" value="1"/>
</dbReference>
<dbReference type="FunFam" id="3.30.1330.20:FF:000001">
    <property type="entry name" value="Tubulin alpha chain"/>
    <property type="match status" value="1"/>
</dbReference>
<dbReference type="FunFam" id="3.40.50.1440:FF:000019">
    <property type="entry name" value="Tubulin alpha chain"/>
    <property type="match status" value="1"/>
</dbReference>
<dbReference type="Gene3D" id="1.10.287.600">
    <property type="entry name" value="Helix hairpin bin"/>
    <property type="match status" value="1"/>
</dbReference>
<dbReference type="Gene3D" id="3.30.1330.20">
    <property type="entry name" value="Tubulin/FtsZ, C-terminal domain"/>
    <property type="match status" value="1"/>
</dbReference>
<dbReference type="Gene3D" id="3.40.50.1440">
    <property type="entry name" value="Tubulin/FtsZ, GTPase domain"/>
    <property type="match status" value="1"/>
</dbReference>
<dbReference type="InterPro" id="IPR002452">
    <property type="entry name" value="Alpha_tubulin"/>
</dbReference>
<dbReference type="InterPro" id="IPR008280">
    <property type="entry name" value="Tub_FtsZ_C"/>
</dbReference>
<dbReference type="InterPro" id="IPR000217">
    <property type="entry name" value="Tubulin"/>
</dbReference>
<dbReference type="InterPro" id="IPR037103">
    <property type="entry name" value="Tubulin/FtsZ-like_C"/>
</dbReference>
<dbReference type="InterPro" id="IPR018316">
    <property type="entry name" value="Tubulin/FtsZ_2-layer-sand-dom"/>
</dbReference>
<dbReference type="InterPro" id="IPR036525">
    <property type="entry name" value="Tubulin/FtsZ_GTPase_sf"/>
</dbReference>
<dbReference type="InterPro" id="IPR023123">
    <property type="entry name" value="Tubulin_C"/>
</dbReference>
<dbReference type="InterPro" id="IPR017975">
    <property type="entry name" value="Tubulin_CS"/>
</dbReference>
<dbReference type="InterPro" id="IPR003008">
    <property type="entry name" value="Tubulin_FtsZ_GTPase"/>
</dbReference>
<dbReference type="PANTHER" id="PTHR11588">
    <property type="entry name" value="TUBULIN"/>
    <property type="match status" value="1"/>
</dbReference>
<dbReference type="Pfam" id="PF00091">
    <property type="entry name" value="Tubulin"/>
    <property type="match status" value="1"/>
</dbReference>
<dbReference type="Pfam" id="PF03953">
    <property type="entry name" value="Tubulin_C"/>
    <property type="match status" value="1"/>
</dbReference>
<dbReference type="PRINTS" id="PR01162">
    <property type="entry name" value="ALPHATUBULIN"/>
</dbReference>
<dbReference type="PRINTS" id="PR01161">
    <property type="entry name" value="TUBULIN"/>
</dbReference>
<dbReference type="SMART" id="SM00864">
    <property type="entry name" value="Tubulin"/>
    <property type="match status" value="1"/>
</dbReference>
<dbReference type="SMART" id="SM00865">
    <property type="entry name" value="Tubulin_C"/>
    <property type="match status" value="1"/>
</dbReference>
<dbReference type="SUPFAM" id="SSF55307">
    <property type="entry name" value="Tubulin C-terminal domain-like"/>
    <property type="match status" value="1"/>
</dbReference>
<dbReference type="SUPFAM" id="SSF52490">
    <property type="entry name" value="Tubulin nucleotide-binding domain-like"/>
    <property type="match status" value="1"/>
</dbReference>
<dbReference type="PROSITE" id="PS00227">
    <property type="entry name" value="TUBULIN"/>
    <property type="match status" value="1"/>
</dbReference>
<name>TBA2_CAEEL</name>
<gene>
    <name type="primary">tba-2</name>
    <name type="ORF">C47B2.3</name>
</gene>
<proteinExistence type="evidence at protein level"/>